<keyword id="KW-0067">ATP-binding</keyword>
<keyword id="KW-0963">Cytoplasm</keyword>
<keyword id="KW-0238">DNA-binding</keyword>
<keyword id="KW-0413">Isomerase</keyword>
<keyword id="KW-0460">Magnesium</keyword>
<keyword id="KW-0479">Metal-binding</keyword>
<keyword id="KW-0547">Nucleotide-binding</keyword>
<keyword id="KW-1185">Reference proteome</keyword>
<keyword id="KW-0799">Topoisomerase</keyword>
<feature type="chain" id="PRO_0000145355" description="DNA gyrase subunit B">
    <location>
        <begin position="1"/>
        <end position="636"/>
    </location>
</feature>
<feature type="domain" description="Toprim" evidence="1">
    <location>
        <begin position="421"/>
        <end position="535"/>
    </location>
</feature>
<feature type="binding site" evidence="1">
    <location>
        <position position="427"/>
    </location>
    <ligand>
        <name>Mg(2+)</name>
        <dbReference type="ChEBI" id="CHEBI:18420"/>
        <label>1</label>
        <note>catalytic</note>
    </ligand>
</feature>
<feature type="binding site" evidence="1">
    <location>
        <position position="500"/>
    </location>
    <ligand>
        <name>Mg(2+)</name>
        <dbReference type="ChEBI" id="CHEBI:18420"/>
        <label>1</label>
        <note>catalytic</note>
    </ligand>
</feature>
<feature type="binding site" evidence="1">
    <location>
        <position position="500"/>
    </location>
    <ligand>
        <name>Mg(2+)</name>
        <dbReference type="ChEBI" id="CHEBI:18420"/>
        <label>2</label>
    </ligand>
</feature>
<feature type="binding site" evidence="1">
    <location>
        <position position="502"/>
    </location>
    <ligand>
        <name>Mg(2+)</name>
        <dbReference type="ChEBI" id="CHEBI:18420"/>
        <label>2</label>
    </ligand>
</feature>
<feature type="site" description="Interaction with DNA" evidence="1">
    <location>
        <position position="452"/>
    </location>
</feature>
<feature type="site" description="Interaction with DNA" evidence="1">
    <location>
        <position position="455"/>
    </location>
</feature>
<feature type="sequence conflict" description="In Ref. 1; AAC44498." evidence="2" ref="1">
    <original>V</original>
    <variation>M</variation>
    <location>
        <position position="152"/>
    </location>
</feature>
<organism>
    <name type="scientific">Thermotoga maritima (strain ATCC 43589 / DSM 3109 / JCM 10099 / NBRC 100826 / MSB8)</name>
    <dbReference type="NCBI Taxonomy" id="243274"/>
    <lineage>
        <taxon>Bacteria</taxon>
        <taxon>Thermotogati</taxon>
        <taxon>Thermotogota</taxon>
        <taxon>Thermotogae</taxon>
        <taxon>Thermotogales</taxon>
        <taxon>Thermotogaceae</taxon>
        <taxon>Thermotoga</taxon>
    </lineage>
</organism>
<accession>P77993</accession>
<reference key="1">
    <citation type="journal article" date="1996" name="Gene">
        <title>A gyrB-like gene from the hyperthermophilic bacterion Thermotoga maritima.</title>
        <authorList>
            <person name="Guipaud O."/>
            <person name="Labedan B."/>
            <person name="Forterre P."/>
        </authorList>
    </citation>
    <scope>NUCLEOTIDE SEQUENCE [GENOMIC DNA]</scope>
    <source>
        <strain>ATCC 43589 / DSM 3109 / JCM 10099 / NBRC 100826 / MSB8</strain>
    </source>
</reference>
<reference key="2">
    <citation type="journal article" date="1999" name="Nature">
        <title>Evidence for lateral gene transfer between Archaea and Bacteria from genome sequence of Thermotoga maritima.</title>
        <authorList>
            <person name="Nelson K.E."/>
            <person name="Clayton R.A."/>
            <person name="Gill S.R."/>
            <person name="Gwinn M.L."/>
            <person name="Dodson R.J."/>
            <person name="Haft D.H."/>
            <person name="Hickey E.K."/>
            <person name="Peterson J.D."/>
            <person name="Nelson W.C."/>
            <person name="Ketchum K.A."/>
            <person name="McDonald L.A."/>
            <person name="Utterback T.R."/>
            <person name="Malek J.A."/>
            <person name="Linher K.D."/>
            <person name="Garrett M.M."/>
            <person name="Stewart A.M."/>
            <person name="Cotton M.D."/>
            <person name="Pratt M.S."/>
            <person name="Phillips C.A."/>
            <person name="Richardson D.L."/>
            <person name="Heidelberg J.F."/>
            <person name="Sutton G.G."/>
            <person name="Fleischmann R.D."/>
            <person name="Eisen J.A."/>
            <person name="White O."/>
            <person name="Salzberg S.L."/>
            <person name="Smith H.O."/>
            <person name="Venter J.C."/>
            <person name="Fraser C.M."/>
        </authorList>
    </citation>
    <scope>NUCLEOTIDE SEQUENCE [LARGE SCALE GENOMIC DNA]</scope>
    <source>
        <strain>ATCC 43589 / DSM 3109 / JCM 10099 / NBRC 100826 / MSB8</strain>
    </source>
</reference>
<dbReference type="EC" id="5.6.2.2" evidence="1"/>
<dbReference type="EMBL" id="U49692">
    <property type="protein sequence ID" value="AAC44498.1"/>
    <property type="molecule type" value="Genomic_DNA"/>
</dbReference>
<dbReference type="EMBL" id="AE000512">
    <property type="protein sequence ID" value="AAD35915.1"/>
    <property type="molecule type" value="Genomic_DNA"/>
</dbReference>
<dbReference type="PIR" id="JC4960">
    <property type="entry name" value="JC4960"/>
</dbReference>
<dbReference type="RefSeq" id="NP_228642.1">
    <property type="nucleotide sequence ID" value="NC_000853.1"/>
</dbReference>
<dbReference type="RefSeq" id="WP_004080806.1">
    <property type="nucleotide sequence ID" value="NC_000853.1"/>
</dbReference>
<dbReference type="SMR" id="P77993"/>
<dbReference type="FunCoup" id="P77993">
    <property type="interactions" value="336"/>
</dbReference>
<dbReference type="STRING" id="243274.TM_0833"/>
<dbReference type="PaxDb" id="243274-THEMA_00475"/>
<dbReference type="DNASU" id="898504"/>
<dbReference type="EnsemblBacteria" id="AAD35915">
    <property type="protein sequence ID" value="AAD35915"/>
    <property type="gene ID" value="TM_0833"/>
</dbReference>
<dbReference type="KEGG" id="tma:TM0833"/>
<dbReference type="KEGG" id="tmi:THEMA_00475"/>
<dbReference type="KEGG" id="tmm:Tmari_0835"/>
<dbReference type="KEGG" id="tmw:THMA_0854"/>
<dbReference type="eggNOG" id="COG0187">
    <property type="taxonomic scope" value="Bacteria"/>
</dbReference>
<dbReference type="InParanoid" id="P77993"/>
<dbReference type="OrthoDB" id="9802808at2"/>
<dbReference type="BRENDA" id="5.99.1.3">
    <property type="organism ID" value="6331"/>
</dbReference>
<dbReference type="Proteomes" id="UP000008183">
    <property type="component" value="Chromosome"/>
</dbReference>
<dbReference type="GO" id="GO:0005694">
    <property type="term" value="C:chromosome"/>
    <property type="evidence" value="ECO:0007669"/>
    <property type="project" value="InterPro"/>
</dbReference>
<dbReference type="GO" id="GO:0005737">
    <property type="term" value="C:cytoplasm"/>
    <property type="evidence" value="ECO:0007669"/>
    <property type="project" value="UniProtKB-SubCell"/>
</dbReference>
<dbReference type="GO" id="GO:0005524">
    <property type="term" value="F:ATP binding"/>
    <property type="evidence" value="ECO:0007669"/>
    <property type="project" value="UniProtKB-UniRule"/>
</dbReference>
<dbReference type="GO" id="GO:0003677">
    <property type="term" value="F:DNA binding"/>
    <property type="evidence" value="ECO:0007669"/>
    <property type="project" value="UniProtKB-KW"/>
</dbReference>
<dbReference type="GO" id="GO:0003918">
    <property type="term" value="F:DNA topoisomerase type II (double strand cut, ATP-hydrolyzing) activity"/>
    <property type="evidence" value="ECO:0007669"/>
    <property type="project" value="UniProtKB-UniRule"/>
</dbReference>
<dbReference type="GO" id="GO:0046872">
    <property type="term" value="F:metal ion binding"/>
    <property type="evidence" value="ECO:0007669"/>
    <property type="project" value="UniProtKB-KW"/>
</dbReference>
<dbReference type="GO" id="GO:0006265">
    <property type="term" value="P:DNA topological change"/>
    <property type="evidence" value="ECO:0007669"/>
    <property type="project" value="UniProtKB-UniRule"/>
</dbReference>
<dbReference type="GO" id="GO:0006261">
    <property type="term" value="P:DNA-templated DNA replication"/>
    <property type="evidence" value="ECO:0007669"/>
    <property type="project" value="UniProtKB-UniRule"/>
</dbReference>
<dbReference type="CDD" id="cd16928">
    <property type="entry name" value="HATPase_GyrB-like"/>
    <property type="match status" value="1"/>
</dbReference>
<dbReference type="CDD" id="cd00822">
    <property type="entry name" value="TopoII_Trans_DNA_gyrase"/>
    <property type="match status" value="1"/>
</dbReference>
<dbReference type="CDD" id="cd03366">
    <property type="entry name" value="TOPRIM_TopoIIA_GyrB"/>
    <property type="match status" value="1"/>
</dbReference>
<dbReference type="FunFam" id="3.30.230.10:FF:000005">
    <property type="entry name" value="DNA gyrase subunit B"/>
    <property type="match status" value="1"/>
</dbReference>
<dbReference type="FunFam" id="3.30.565.10:FF:000002">
    <property type="entry name" value="DNA gyrase subunit B"/>
    <property type="match status" value="1"/>
</dbReference>
<dbReference type="FunFam" id="3.40.50.670:FF:000002">
    <property type="entry name" value="DNA gyrase subunit B"/>
    <property type="match status" value="1"/>
</dbReference>
<dbReference type="Gene3D" id="3.30.230.10">
    <property type="match status" value="1"/>
</dbReference>
<dbReference type="Gene3D" id="3.40.50.670">
    <property type="match status" value="1"/>
</dbReference>
<dbReference type="Gene3D" id="3.30.565.10">
    <property type="entry name" value="Histidine kinase-like ATPase, C-terminal domain"/>
    <property type="match status" value="1"/>
</dbReference>
<dbReference type="HAMAP" id="MF_01898">
    <property type="entry name" value="GyrB"/>
    <property type="match status" value="1"/>
</dbReference>
<dbReference type="InterPro" id="IPR002288">
    <property type="entry name" value="DNA_gyrase_B_C"/>
</dbReference>
<dbReference type="InterPro" id="IPR011557">
    <property type="entry name" value="GyrB"/>
</dbReference>
<dbReference type="InterPro" id="IPR036890">
    <property type="entry name" value="HATPase_C_sf"/>
</dbReference>
<dbReference type="InterPro" id="IPR020568">
    <property type="entry name" value="Ribosomal_Su5_D2-typ_SF"/>
</dbReference>
<dbReference type="InterPro" id="IPR014721">
    <property type="entry name" value="Ribsml_uS5_D2-typ_fold_subgr"/>
</dbReference>
<dbReference type="InterPro" id="IPR001241">
    <property type="entry name" value="Topo_IIA"/>
</dbReference>
<dbReference type="InterPro" id="IPR013760">
    <property type="entry name" value="Topo_IIA-like_dom_sf"/>
</dbReference>
<dbReference type="InterPro" id="IPR000565">
    <property type="entry name" value="Topo_IIA_B"/>
</dbReference>
<dbReference type="InterPro" id="IPR013759">
    <property type="entry name" value="Topo_IIA_B_C"/>
</dbReference>
<dbReference type="InterPro" id="IPR013506">
    <property type="entry name" value="Topo_IIA_bsu_dom2"/>
</dbReference>
<dbReference type="InterPro" id="IPR018522">
    <property type="entry name" value="TopoIIA_CS"/>
</dbReference>
<dbReference type="InterPro" id="IPR006171">
    <property type="entry name" value="TOPRIM_dom"/>
</dbReference>
<dbReference type="InterPro" id="IPR034160">
    <property type="entry name" value="TOPRIM_GyrB"/>
</dbReference>
<dbReference type="NCBIfam" id="TIGR01059">
    <property type="entry name" value="gyrB"/>
    <property type="match status" value="1"/>
</dbReference>
<dbReference type="NCBIfam" id="NF004189">
    <property type="entry name" value="PRK05644.1"/>
    <property type="match status" value="1"/>
</dbReference>
<dbReference type="NCBIfam" id="NF011501">
    <property type="entry name" value="PRK14939.1"/>
    <property type="match status" value="1"/>
</dbReference>
<dbReference type="PANTHER" id="PTHR45866:SF1">
    <property type="entry name" value="DNA GYRASE SUBUNIT B, MITOCHONDRIAL"/>
    <property type="match status" value="1"/>
</dbReference>
<dbReference type="PANTHER" id="PTHR45866">
    <property type="entry name" value="DNA GYRASE/TOPOISOMERASE SUBUNIT B"/>
    <property type="match status" value="1"/>
</dbReference>
<dbReference type="Pfam" id="PF00204">
    <property type="entry name" value="DNA_gyraseB"/>
    <property type="match status" value="1"/>
</dbReference>
<dbReference type="Pfam" id="PF00986">
    <property type="entry name" value="DNA_gyraseB_C"/>
    <property type="match status" value="1"/>
</dbReference>
<dbReference type="Pfam" id="PF02518">
    <property type="entry name" value="HATPase_c"/>
    <property type="match status" value="1"/>
</dbReference>
<dbReference type="Pfam" id="PF01751">
    <property type="entry name" value="Toprim"/>
    <property type="match status" value="1"/>
</dbReference>
<dbReference type="PRINTS" id="PR01159">
    <property type="entry name" value="DNAGYRASEB"/>
</dbReference>
<dbReference type="PRINTS" id="PR00418">
    <property type="entry name" value="TPI2FAMILY"/>
</dbReference>
<dbReference type="SMART" id="SM00387">
    <property type="entry name" value="HATPase_c"/>
    <property type="match status" value="1"/>
</dbReference>
<dbReference type="SMART" id="SM00433">
    <property type="entry name" value="TOP2c"/>
    <property type="match status" value="1"/>
</dbReference>
<dbReference type="SUPFAM" id="SSF55874">
    <property type="entry name" value="ATPase domain of HSP90 chaperone/DNA topoisomerase II/histidine kinase"/>
    <property type="match status" value="1"/>
</dbReference>
<dbReference type="SUPFAM" id="SSF54211">
    <property type="entry name" value="Ribosomal protein S5 domain 2-like"/>
    <property type="match status" value="1"/>
</dbReference>
<dbReference type="SUPFAM" id="SSF56719">
    <property type="entry name" value="Type II DNA topoisomerase"/>
    <property type="match status" value="1"/>
</dbReference>
<dbReference type="PROSITE" id="PS00177">
    <property type="entry name" value="TOPOISOMERASE_II"/>
    <property type="match status" value="1"/>
</dbReference>
<dbReference type="PROSITE" id="PS50880">
    <property type="entry name" value="TOPRIM"/>
    <property type="match status" value="1"/>
</dbReference>
<proteinExistence type="inferred from homology"/>
<gene>
    <name evidence="1" type="primary">gyrB</name>
    <name type="synonym">top2B</name>
    <name type="ordered locus">TM_0833</name>
</gene>
<comment type="function">
    <text evidence="1">A type II topoisomerase that negatively supercoils closed circular double-stranded (ds) DNA in an ATP-dependent manner to modulate DNA topology and maintain chromosomes in an underwound state. Negative supercoiling favors strand separation, and DNA replication, transcription, recombination and repair, all of which involve strand separation. Also able to catalyze the interconversion of other topological isomers of dsDNA rings, including catenanes and knotted rings. Type II topoisomerases break and join 2 DNA strands simultaneously in an ATP-dependent manner.</text>
</comment>
<comment type="catalytic activity">
    <reaction evidence="1">
        <text>ATP-dependent breakage, passage and rejoining of double-stranded DNA.</text>
        <dbReference type="EC" id="5.6.2.2"/>
    </reaction>
</comment>
<comment type="cofactor">
    <cofactor evidence="1">
        <name>Mg(2+)</name>
        <dbReference type="ChEBI" id="CHEBI:18420"/>
    </cofactor>
    <cofactor evidence="1">
        <name>Mn(2+)</name>
        <dbReference type="ChEBI" id="CHEBI:29035"/>
    </cofactor>
    <cofactor evidence="1">
        <name>Ca(2+)</name>
        <dbReference type="ChEBI" id="CHEBI:29108"/>
    </cofactor>
    <text evidence="1">Binds two Mg(2+) per subunit. The magnesium ions form salt bridges with both the protein and the DNA. Can also accept other divalent metal cations, such as Mn(2+) or Ca(2+).</text>
</comment>
<comment type="subunit">
    <text evidence="1">Heterotetramer, composed of two GyrA and two GyrB chains. In the heterotetramer, GyrA contains the active site tyrosine that forms a transient covalent intermediate with DNA, while GyrB binds cofactors and catalyzes ATP hydrolysis.</text>
</comment>
<comment type="subcellular location">
    <subcellularLocation>
        <location evidence="1">Cytoplasm</location>
    </subcellularLocation>
</comment>
<comment type="miscellaneous">
    <text evidence="1">Few gyrases are as efficient as E.coli at forming negative supercoils. Not all organisms have 2 type II topoisomerases; in organisms with a single type II topoisomerase this enzyme also has to decatenate newly replicated chromosomes.</text>
</comment>
<comment type="similarity">
    <text evidence="1">Belongs to the type II topoisomerase GyrB family.</text>
</comment>
<evidence type="ECO:0000255" key="1">
    <source>
        <dbReference type="HAMAP-Rule" id="MF_01898"/>
    </source>
</evidence>
<evidence type="ECO:0000305" key="2"/>
<protein>
    <recommendedName>
        <fullName evidence="1">DNA gyrase subunit B</fullName>
        <ecNumber evidence="1">5.6.2.2</ecNumber>
    </recommendedName>
</protein>
<name>GYRB_THEMA</name>
<sequence>MEKYSAESIKVLKGLEPVRMRPGMYIGSTGKRGLHHLVYEVVDNSVDEALAGYCDWIRVTLHEDGSVEVEDNGRGIPVDIHPEEGRSALEVVFTVLHAGGKFSKDSYKISGGLHGVGVSVVNALSEWLEVRVHRDGKIYRQRYERGKPVTPVEVIGETDKHGTIVRFKPDPLIFSETEFDPDILEHRLREIAFLVPGLKIEFEDRINGEKKTFKFDGGIVEYVKYLNRGKKALHDVIHIKRTEKVKTKNGEDEVIVEIAFQYTDSYSEDIVSFANTIKTVDGGTHVTAFKSTLTRLMNEYGKKHNFLKKDDSFQGEDVREGLTAVISVYVKNPEFEGQTKSKLGNEEVKEAVTKAMREELKKIFDANPELVKTILSKIMSTKQAREAAKRAREMVRRKNVLQNTTLPGKLADCSSTHREKTELFIVEGDSAGGSAKQARDREFQAVLPIRGKILNVEKSSLDRLLKNEQISDIIVAVGTGIGDDFDESKLRYGRIIIMTDADIDGAHIRTLLLTLFYRYMRPLIEQGRVYIALPPLYRIKAGREEFYVYSDQELAEYKEKLQGKRIEIQRYKGLGEMNPEQLWETTMNPETRKIIRVTIEDAEEADRLFEILMGNDPSSRREFIERHALKVKELDI</sequence>